<organism>
    <name type="scientific">Cricetulus griseus</name>
    <name type="common">Chinese hamster</name>
    <name type="synonym">Cricetulus barabensis griseus</name>
    <dbReference type="NCBI Taxonomy" id="10029"/>
    <lineage>
        <taxon>Eukaryota</taxon>
        <taxon>Metazoa</taxon>
        <taxon>Chordata</taxon>
        <taxon>Craniata</taxon>
        <taxon>Vertebrata</taxon>
        <taxon>Euteleostomi</taxon>
        <taxon>Mammalia</taxon>
        <taxon>Eutheria</taxon>
        <taxon>Euarchontoglires</taxon>
        <taxon>Glires</taxon>
        <taxon>Rodentia</taxon>
        <taxon>Myomorpha</taxon>
        <taxon>Muroidea</taxon>
        <taxon>Cricetidae</taxon>
        <taxon>Cricetinae</taxon>
        <taxon>Cricetulus</taxon>
    </lineage>
</organism>
<feature type="chain" id="PRO_0000086364" description="Dual specificity mitogen-activated protein kinase kinase 1">
    <location>
        <begin position="1"/>
        <end position="393"/>
    </location>
</feature>
<feature type="domain" description="Protein kinase" evidence="6">
    <location>
        <begin position="68"/>
        <end position="361"/>
    </location>
</feature>
<feature type="region of interest" description="Disordered" evidence="8">
    <location>
        <begin position="1"/>
        <end position="26"/>
    </location>
</feature>
<feature type="region of interest" description="RAF1-binding" evidence="1">
    <location>
        <begin position="270"/>
        <end position="307"/>
    </location>
</feature>
<feature type="compositionally biased region" description="Polar residues" evidence="8">
    <location>
        <begin position="9"/>
        <end position="26"/>
    </location>
</feature>
<feature type="active site" description="Proton acceptor" evidence="6 7">
    <location>
        <position position="190"/>
    </location>
</feature>
<feature type="binding site" evidence="6">
    <location>
        <begin position="74"/>
        <end position="82"/>
    </location>
    <ligand>
        <name>ATP</name>
        <dbReference type="ChEBI" id="CHEBI:30616"/>
    </ligand>
</feature>
<feature type="binding site" evidence="6">
    <location>
        <position position="97"/>
    </location>
    <ligand>
        <name>ATP</name>
        <dbReference type="ChEBI" id="CHEBI:30616"/>
    </ligand>
</feature>
<feature type="modified residue" description="Phosphoserine; by RAF" evidence="5">
    <location>
        <position position="218"/>
    </location>
</feature>
<feature type="modified residue" description="Phosphoserine; by RAF" evidence="5">
    <location>
        <position position="222"/>
    </location>
</feature>
<feature type="modified residue" description="Phosphothreonine" evidence="5">
    <location>
        <position position="286"/>
    </location>
</feature>
<feature type="modified residue" description="Phosphothreonine; by MAPK1" evidence="4">
    <location>
        <position position="292"/>
    </location>
</feature>
<feature type="modified residue" description="Phosphoserine; by PAK" evidence="5">
    <location>
        <position position="298"/>
    </location>
</feature>
<feature type="mutagenesis site" description="No loss of activity." evidence="9">
    <original>D</original>
    <variation>N</variation>
    <location>
        <position position="208"/>
    </location>
</feature>
<feature type="mutagenesis site" description="Inactivation and reduced phosphorylation." evidence="9">
    <original>S</original>
    <variation>A</variation>
    <location>
        <position position="222"/>
    </location>
</feature>
<feature type="mutagenesis site" description="No loss of activity." evidence="9">
    <original>S</original>
    <variation>D</variation>
    <location>
        <position position="222"/>
    </location>
</feature>
<feature type="mutagenesis site" description="No loss of activity." evidence="9">
    <original>S</original>
    <variation>A</variation>
    <location>
        <position position="228"/>
    </location>
</feature>
<feature type="sequence conflict" description="In Ref. 2; EGW03142." evidence="10" ref="2">
    <original>PKKKPTPIQLNPTPDGSAVNGTSSAETNLEA</original>
    <variation>LCQQPQPSHRANLVD</variation>
    <location>
        <begin position="2"/>
        <end position="32"/>
    </location>
</feature>
<feature type="sequence conflict" description="In Ref. 2; EGW03142." evidence="10" ref="2">
    <original>ELEEQQRN</original>
    <variation>DLDEQQRK</variation>
    <location>
        <begin position="41"/>
        <end position="48"/>
    </location>
</feature>
<feature type="sequence conflict" description="In Ref. 2; EGW03142." evidence="10" ref="2">
    <original>Q</original>
    <variation>A</variation>
    <location>
        <position position="58"/>
    </location>
</feature>
<feature type="sequence conflict" description="In Ref. 2; EGW03142." evidence="10" ref="2">
    <original>K</original>
    <variation>R</variation>
    <location>
        <position position="70"/>
    </location>
</feature>
<feature type="sequence conflict" description="In Ref. 2; EGW03142." evidence="10" ref="2">
    <original>FKVS</original>
    <variation>TKAQ</variation>
    <location>
        <begin position="83"/>
        <end position="86"/>
    </location>
</feature>
<feature type="sequence conflict" description="In Ref. 2; EGW03142." evidence="10" ref="2">
    <original>V</original>
    <variation>I</variation>
    <location>
        <position position="93"/>
    </location>
</feature>
<feature type="sequence conflict" description="In Ref. 2; EGW03142." evidence="10" ref="2">
    <original>I</original>
    <variation>V</variation>
    <location>
        <position position="107"/>
    </location>
</feature>
<feature type="sequence conflict" description="In Ref. 2; EGW03142." evidence="10" ref="2">
    <original>V</original>
    <variation>A</variation>
    <location>
        <position position="132"/>
    </location>
</feature>
<feature type="sequence conflict" description="In Ref. 2; EGW03142." evidence="10" ref="2">
    <original>KAGRIPEQ</original>
    <variation>EAKRIPED</variation>
    <location>
        <begin position="157"/>
        <end position="164"/>
    </location>
</feature>
<feature type="sequence conflict" description="In Ref. 2; EGW03142." evidence="10" ref="2">
    <original>IKGLT</original>
    <variation>LRGLA</variation>
    <location>
        <begin position="174"/>
        <end position="178"/>
    </location>
</feature>
<feature type="sequence conflict" description="In Ref. 2; EGW03142." evidence="10" ref="2">
    <original>K</original>
    <variation>Q</variation>
    <location>
        <position position="185"/>
    </location>
</feature>
<feature type="sequence conflict" description="In Ref. 2; EGW03142." evidence="10" ref="2">
    <original>S</original>
    <variation>C</variation>
    <location>
        <position position="200"/>
    </location>
</feature>
<feature type="sequence conflict" description="In Ref. 2; EGW03142." evidence="10" ref="2">
    <original>MAV</original>
    <variation>LAI</variation>
    <location>
        <begin position="256"/>
        <end position="258"/>
    </location>
</feature>
<feature type="sequence conflict" description="In Ref. 2; EGW03142." evidence="10" ref="2">
    <original>LLFGCQVEGDAAETPPRPRTPGRPLSSY</original>
    <variation>ASFGRPVVDGADGEPHSVSPRPRPPGRPISGH</variation>
    <location>
        <begin position="273"/>
        <end position="300"/>
    </location>
</feature>
<feature type="sequence conflict" description="In Ref. 2; EGW03142." evidence="10" ref="2">
    <original>P</original>
    <variation>A</variation>
    <location>
        <position position="307"/>
    </location>
</feature>
<feature type="sequence conflict" description="In Ref. 2; EGW03142." evidence="10" ref="2">
    <original>A</original>
    <variation>P</variation>
    <location>
        <position position="323"/>
    </location>
</feature>
<feature type="sequence conflict" description="In Ref. 2; EGW03142." evidence="10" ref="2">
    <original>LEFQD</original>
    <variation>SDFQE</variation>
    <location>
        <begin position="332"/>
        <end position="336"/>
    </location>
</feature>
<feature type="sequence conflict" description="In Ref. 2; EGW03142." evidence="10" ref="2">
    <original>QLLV</original>
    <variation>MLMN</variation>
    <location>
        <begin position="354"/>
        <end position="357"/>
    </location>
</feature>
<feature type="sequence conflict" description="In Ref. 2; EGW03142." evidence="10" ref="2">
    <original>RSDA</original>
    <variation>HSEG</variation>
    <location>
        <begin position="363"/>
        <end position="366"/>
    </location>
</feature>
<feature type="sequence conflict" description="In Ref. 2; EGW03142." evidence="10" ref="2">
    <original>STIGLN</original>
    <variation>RTLRLK</variation>
    <location>
        <begin position="377"/>
        <end position="382"/>
    </location>
</feature>
<feature type="sequence conflict" description="In Ref. 2; EGW03142." evidence="10" ref="2">
    <original>HAASI</original>
    <variation>RTAV</variation>
    <location>
        <begin position="389"/>
        <end position="393"/>
    </location>
</feature>
<comment type="function">
    <text evidence="1 5">Dual specificity protein kinase which acts as an essential component of the MAP kinase signal transduction pathway. Binding of extracellular ligands such as growth factors, cytokines and hormones to their cell-surface receptors activates RAS and this initiates RAF1 activation. RAF1 then further activates the dual-specificity protein kinases MAP2K1/MEK1 and MAP2K2/MEK2. Both MAP2K1/MEK1 and MAP2K2/MEK2 function specifically in the MAPK/ERK cascade, and catalyze the concomitant phosphorylation of a threonine and a tyrosine residue in a Thr-Glu-Tyr sequence located in the extracellular signal-regulated kinases MAPK3/ERK1 and MAPK1/ERK2, leading to their activation and further transduction of the signal within the MAPK/ERK cascade. Activates BRAF in a KSR1 or KSR2-dependent manner; by binding to KSR1 or KSR2 releases the inhibitory intramolecular interaction between KSR1 or KSR2 protein kinase and N-terminal domains which promotes KSR1 or KSR2-BRAF dimerization and BRAF activation (By similarity). Depending on the cellular context, this pathway mediates diverse biological functions such as cell growth, adhesion, survival and differentiation, predominantly through the regulation of transcription, metabolism and cytoskeletal rearrangements. One target of the MAPK/ERK cascade is peroxisome proliferator-activated receptor gamma (PPARG), a nuclear receptor that promotes differentiation and apoptosis. MAP2K1/MEK1 has been shown to export PPARG from the nucleus. The MAPK/ERK cascade is also involved in the regulation of endosomal dynamics, including lysosome processing and endosome cycling through the perinuclear recycling compartment (PNRC), as well as in the fragmentation of the Golgi apparatus during mitosis (By similarity).</text>
</comment>
<comment type="catalytic activity">
    <reaction>
        <text>L-seryl-[protein] + ATP = O-phospho-L-seryl-[protein] + ADP + H(+)</text>
        <dbReference type="Rhea" id="RHEA:17989"/>
        <dbReference type="Rhea" id="RHEA-COMP:9863"/>
        <dbReference type="Rhea" id="RHEA-COMP:11604"/>
        <dbReference type="ChEBI" id="CHEBI:15378"/>
        <dbReference type="ChEBI" id="CHEBI:29999"/>
        <dbReference type="ChEBI" id="CHEBI:30616"/>
        <dbReference type="ChEBI" id="CHEBI:83421"/>
        <dbReference type="ChEBI" id="CHEBI:456216"/>
        <dbReference type="EC" id="2.7.12.2"/>
    </reaction>
</comment>
<comment type="catalytic activity">
    <reaction>
        <text>L-threonyl-[protein] + ATP = O-phospho-L-threonyl-[protein] + ADP + H(+)</text>
        <dbReference type="Rhea" id="RHEA:46608"/>
        <dbReference type="Rhea" id="RHEA-COMP:11060"/>
        <dbReference type="Rhea" id="RHEA-COMP:11605"/>
        <dbReference type="ChEBI" id="CHEBI:15378"/>
        <dbReference type="ChEBI" id="CHEBI:30013"/>
        <dbReference type="ChEBI" id="CHEBI:30616"/>
        <dbReference type="ChEBI" id="CHEBI:61977"/>
        <dbReference type="ChEBI" id="CHEBI:456216"/>
        <dbReference type="EC" id="2.7.12.2"/>
    </reaction>
</comment>
<comment type="catalytic activity">
    <reaction>
        <text>L-tyrosyl-[protein] + ATP = O-phospho-L-tyrosyl-[protein] + ADP + H(+)</text>
        <dbReference type="Rhea" id="RHEA:10596"/>
        <dbReference type="Rhea" id="RHEA-COMP:10136"/>
        <dbReference type="Rhea" id="RHEA-COMP:20101"/>
        <dbReference type="ChEBI" id="CHEBI:15378"/>
        <dbReference type="ChEBI" id="CHEBI:30616"/>
        <dbReference type="ChEBI" id="CHEBI:46858"/>
        <dbReference type="ChEBI" id="CHEBI:61978"/>
        <dbReference type="ChEBI" id="CHEBI:456216"/>
        <dbReference type="EC" id="2.7.12.2"/>
    </reaction>
</comment>
<comment type="activity regulation">
    <text evidence="1 5">Ras proteins such as HRAS mediate the activation of RAF proteins such as RAF1 or BRAF which in turn activate extracellular signal-regulated kinases (ERK) through MAPK (mitogen-activated protein kinases) and ERK kinases MAP2K1/MEK1 and MAP2K2/MEK2. Activation occurs through phosphorylation of Ser-218 and Ser-222. MAP2K1/MEK1 binds KSR1 or KSR2 releasing the inhibitory intramolecular interaction between KSR1 or KSR2 protein kinase and N-terminal domains (By similarity). This allows KSR1 or KSR2 dimerization with BRAF leading to BRAF activation and phosphorylation of MAP2K1 (By similarity). MAP2K1/MEK1 is also the target of negative feed-back regulation by its substrate kinases, such as MAPK1/ERK2. These phosphorylate MAP2K1/MEK1 on Thr-292, thereby facilitating dephosphorylation of the activating residues Ser-218 and Ser-222. Inhibited by serine/threonine phosphatase 2A (By similarity).</text>
</comment>
<comment type="subunit">
    <text evidence="2 3 4 5">Found in a complex with at least BRAF, HRAS, MAP2K1, MAPK3/ERK1 and RGS14 (By similarity). Forms a heterodimer with MAP2K2/MEK2 (By similarity). Forms heterodimers with KSR2 which further dimerize to form tetramers (By similarity). Interacts with KSR1 or KSR2 and BRAF; the interaction with KSR1 or KSR2 mediates KSR1-BRAF or KSR2-BRAF dimerization (By similarity). Interacts with ARBB2, LAMTOR3, MAPK1/ERK2 and RAF1 (By similarity). Interacts with MAPK1/ERK2 (By similarity). Interacts with MORG1 (By similarity). Interacts with PPARG. Interacts with isoform 1 of VRK2. Interacts with SGK1. Interacts with BIRC6/bruce (By similarity). Interacts with KAT7; the interaction promotes KAT7 phosphorylation (By similarity). Interacts with RAF1 and NEK10; the interaction is required for ERK1/2-signaling pathway activation in response to UV irradiation (By similarity). Interacts with TRAF3IP3 (By similarity). Interacts with MOS (By similarity).</text>
</comment>
<comment type="subcellular location">
    <subcellularLocation>
        <location evidence="5">Cytoplasm</location>
        <location evidence="5">Cytoskeleton</location>
        <location evidence="5">Microtubule organizing center</location>
        <location evidence="5">Centrosome</location>
    </subcellularLocation>
    <subcellularLocation>
        <location evidence="5">Cytoplasm</location>
        <location evidence="5">Cytoskeleton</location>
        <location evidence="5">Microtubule organizing center</location>
        <location evidence="5">Spindle pole body</location>
    </subcellularLocation>
    <subcellularLocation>
        <location evidence="5">Cytoplasm</location>
    </subcellularLocation>
    <subcellularLocation>
        <location evidence="5">Nucleus</location>
    </subcellularLocation>
    <subcellularLocation>
        <location evidence="5">Membrane</location>
        <topology evidence="5">Peripheral membrane protein</topology>
    </subcellularLocation>
    <text evidence="5">Localizes at centrosomes during prometaphase, midzone during anaphase and midbody during telophase/cytokinesis. Membrane localization is probably regulated by its interaction with KSR1.</text>
</comment>
<comment type="domain">
    <text evidence="1">The proline-rich region localized between residues 270 and 307 is important for the binding to RAF1 and activation of MAP2K1/MEK1.</text>
</comment>
<comment type="PTM">
    <text evidence="5">Phosphorylation at Ser-218 and Ser-222 by MAP kinase kinase kinases (BRAF or MEKK1) positively regulates the kinase activity (By similarity). Also phosphorylated at Thr-292 by MAPK1/ERK2 and at Ser-298 by PAK (By similarity). MAPK1/ERK2 phosphorylation of Thr-292 occurs in response to cellular adhesion and leads to inhibition of Ser-298 phosphorylation by PAK (By similarity). Autophosphorylated at Ser-218 and Ser-222, autophosphosphorylation is promoted by NEK10 following UV irradiation (By similarity).</text>
</comment>
<comment type="similarity">
    <text evidence="10">Belongs to the protein kinase superfamily. STE Ser/Thr protein kinase family. MAP kinase kinase subfamily.</text>
</comment>
<reference key="1">
    <citation type="journal article" date="1994" name="EMBO J.">
        <title>Constitutive mutant and putative regulatory serine phosphorylation site of mammalian MAP kinase kinase (MEK1).</title>
        <authorList>
            <person name="Pages G."/>
            <person name="Brunet A."/>
            <person name="L'Allemain G."/>
            <person name="Pouyssegur J."/>
        </authorList>
    </citation>
    <scope>NUCLEOTIDE SEQUENCE [MRNA]</scope>
    <scope>MUTAGENESIS OF ASP-208; SER-222 AND SER-228</scope>
    <source>
        <tissue>Lung fibroblast</tissue>
    </source>
</reference>
<reference key="2">
    <citation type="journal article" date="2011" name="Nat. Biotechnol.">
        <title>The genomic sequence of the Chinese hamster ovary (CHO)-K1 cell line.</title>
        <authorList>
            <person name="Xu X."/>
            <person name="Nagarajan H."/>
            <person name="Lewis N.E."/>
            <person name="Pan S."/>
            <person name="Cai Z."/>
            <person name="Liu X."/>
            <person name="Chen W."/>
            <person name="Xie M."/>
            <person name="Wang W."/>
            <person name="Hammond S."/>
            <person name="Andersen M.R."/>
            <person name="Neff N."/>
            <person name="Passarelli B."/>
            <person name="Koh W."/>
            <person name="Fan H.C."/>
            <person name="Wang J."/>
            <person name="Gui Y."/>
            <person name="Lee K.H."/>
            <person name="Betenbaugh M.J."/>
            <person name="Quake S.R."/>
            <person name="Famili I."/>
            <person name="Palsson B.O."/>
            <person name="Wang J."/>
        </authorList>
    </citation>
    <scope>NUCLEOTIDE SEQUENCE [LARGE SCALE GENOMIC DNA]</scope>
</reference>
<accession>Q63980</accession>
<accession>G3HSM1</accession>
<protein>
    <recommendedName>
        <fullName>Dual specificity mitogen-activated protein kinase kinase 1</fullName>
        <shortName>MAP kinase kinase 1</shortName>
        <shortName>MAPKK 1</shortName>
        <ecNumber>2.7.12.2</ecNumber>
    </recommendedName>
    <alternativeName>
        <fullName>ERK activator kinase 1</fullName>
    </alternativeName>
    <alternativeName>
        <fullName>MAPK/ERK kinase 1</fullName>
        <shortName>MEK 1</shortName>
    </alternativeName>
</protein>
<evidence type="ECO:0000250" key="1"/>
<evidence type="ECO:0000250" key="2">
    <source>
        <dbReference type="UniProtKB" id="P29678"/>
    </source>
</evidence>
<evidence type="ECO:0000250" key="3">
    <source>
        <dbReference type="UniProtKB" id="P31938"/>
    </source>
</evidence>
<evidence type="ECO:0000250" key="4">
    <source>
        <dbReference type="UniProtKB" id="Q01986"/>
    </source>
</evidence>
<evidence type="ECO:0000250" key="5">
    <source>
        <dbReference type="UniProtKB" id="Q02750"/>
    </source>
</evidence>
<evidence type="ECO:0000255" key="6">
    <source>
        <dbReference type="PROSITE-ProRule" id="PRU00159"/>
    </source>
</evidence>
<evidence type="ECO:0000255" key="7">
    <source>
        <dbReference type="PROSITE-ProRule" id="PRU10027"/>
    </source>
</evidence>
<evidence type="ECO:0000256" key="8">
    <source>
        <dbReference type="SAM" id="MobiDB-lite"/>
    </source>
</evidence>
<evidence type="ECO:0000269" key="9">
    <source>
    </source>
</evidence>
<evidence type="ECO:0000305" key="10"/>
<dbReference type="EC" id="2.7.12.2"/>
<dbReference type="EMBL" id="S70933">
    <property type="protein sequence ID" value="AAB31379.1"/>
    <property type="molecule type" value="mRNA"/>
</dbReference>
<dbReference type="EMBL" id="JH000665">
    <property type="protein sequence ID" value="EGW03142.1"/>
    <property type="molecule type" value="Genomic_DNA"/>
</dbReference>
<dbReference type="PIR" id="S46361">
    <property type="entry name" value="S46361"/>
</dbReference>
<dbReference type="RefSeq" id="NP_001233756.1">
    <property type="nucleotide sequence ID" value="NM_001246827.1"/>
</dbReference>
<dbReference type="SMR" id="Q63980"/>
<dbReference type="PaxDb" id="10029-NP_001233756.1"/>
<dbReference type="GeneID" id="100689403"/>
<dbReference type="KEGG" id="cge:100689403"/>
<dbReference type="CTD" id="5604"/>
<dbReference type="eggNOG" id="KOG0581">
    <property type="taxonomic scope" value="Eukaryota"/>
</dbReference>
<dbReference type="InParanoid" id="G3HSM1"/>
<dbReference type="OrthoDB" id="10252354at2759"/>
<dbReference type="BRENDA" id="2.7.12.2">
    <property type="organism ID" value="1309"/>
</dbReference>
<dbReference type="Proteomes" id="UP000001075">
    <property type="component" value="Unassembled WGS sequence"/>
</dbReference>
<dbReference type="Proteomes" id="UP000694386">
    <property type="component" value="Unplaced"/>
</dbReference>
<dbReference type="Proteomes" id="UP001108280">
    <property type="component" value="Chromosome 4"/>
</dbReference>
<dbReference type="GO" id="GO:0005813">
    <property type="term" value="C:centrosome"/>
    <property type="evidence" value="ECO:0007669"/>
    <property type="project" value="UniProtKB-SubCell"/>
</dbReference>
<dbReference type="GO" id="GO:0005769">
    <property type="term" value="C:early endosome"/>
    <property type="evidence" value="ECO:0007669"/>
    <property type="project" value="UniProtKB-ARBA"/>
</dbReference>
<dbReference type="GO" id="GO:0005925">
    <property type="term" value="C:focal adhesion"/>
    <property type="evidence" value="ECO:0007669"/>
    <property type="project" value="UniProtKB-ARBA"/>
</dbReference>
<dbReference type="GO" id="GO:0005770">
    <property type="term" value="C:late endosome"/>
    <property type="evidence" value="ECO:0007669"/>
    <property type="project" value="UniProtKB-ARBA"/>
</dbReference>
<dbReference type="GO" id="GO:0016020">
    <property type="term" value="C:membrane"/>
    <property type="evidence" value="ECO:0007669"/>
    <property type="project" value="UniProtKB-SubCell"/>
</dbReference>
<dbReference type="GO" id="GO:0005739">
    <property type="term" value="C:mitochondrion"/>
    <property type="evidence" value="ECO:0007669"/>
    <property type="project" value="UniProtKB-ARBA"/>
</dbReference>
<dbReference type="GO" id="GO:0005634">
    <property type="term" value="C:nucleus"/>
    <property type="evidence" value="ECO:0007669"/>
    <property type="project" value="UniProtKB-SubCell"/>
</dbReference>
<dbReference type="GO" id="GO:0005524">
    <property type="term" value="F:ATP binding"/>
    <property type="evidence" value="ECO:0007669"/>
    <property type="project" value="UniProtKB-KW"/>
</dbReference>
<dbReference type="GO" id="GO:0004708">
    <property type="term" value="F:MAP kinase kinase activity"/>
    <property type="evidence" value="ECO:0007669"/>
    <property type="project" value="UniProtKB-EC"/>
</dbReference>
<dbReference type="GO" id="GO:0106310">
    <property type="term" value="F:protein serine kinase activity"/>
    <property type="evidence" value="ECO:0007669"/>
    <property type="project" value="RHEA"/>
</dbReference>
<dbReference type="GO" id="GO:0004674">
    <property type="term" value="F:protein serine/threonine kinase activity"/>
    <property type="evidence" value="ECO:0007669"/>
    <property type="project" value="UniProtKB-KW"/>
</dbReference>
<dbReference type="GO" id="GO:0004713">
    <property type="term" value="F:protein tyrosine kinase activity"/>
    <property type="evidence" value="ECO:0007669"/>
    <property type="project" value="UniProtKB-KW"/>
</dbReference>
<dbReference type="GO" id="GO:2000641">
    <property type="term" value="P:regulation of early endosome to late endosome transport"/>
    <property type="evidence" value="ECO:0007669"/>
    <property type="project" value="UniProtKB-ARBA"/>
</dbReference>
<dbReference type="GO" id="GO:0090170">
    <property type="term" value="P:regulation of Golgi inheritance"/>
    <property type="evidence" value="ECO:0007669"/>
    <property type="project" value="UniProtKB-ARBA"/>
</dbReference>
<dbReference type="GO" id="GO:0032872">
    <property type="term" value="P:regulation of stress-activated MAPK cascade"/>
    <property type="evidence" value="ECO:0007669"/>
    <property type="project" value="UniProtKB-ARBA"/>
</dbReference>
<dbReference type="CDD" id="cd06650">
    <property type="entry name" value="PKc_MEK1"/>
    <property type="match status" value="1"/>
</dbReference>
<dbReference type="FunFam" id="1.10.510.10:FF:000115">
    <property type="entry name" value="Dual specificity mitogen-activated protein kinase kinase 1"/>
    <property type="match status" value="1"/>
</dbReference>
<dbReference type="FunFam" id="3.30.200.20:FF:000100">
    <property type="entry name" value="Dual specificity mitogen-activated protein kinase kinase 1"/>
    <property type="match status" value="1"/>
</dbReference>
<dbReference type="Gene3D" id="3.30.200.20">
    <property type="entry name" value="Phosphorylase Kinase, domain 1"/>
    <property type="match status" value="1"/>
</dbReference>
<dbReference type="Gene3D" id="1.10.510.10">
    <property type="entry name" value="Transferase(Phosphotransferase) domain 1"/>
    <property type="match status" value="1"/>
</dbReference>
<dbReference type="InterPro" id="IPR011009">
    <property type="entry name" value="Kinase-like_dom_sf"/>
</dbReference>
<dbReference type="InterPro" id="IPR050915">
    <property type="entry name" value="MAP_kinase_kinase"/>
</dbReference>
<dbReference type="InterPro" id="IPR000719">
    <property type="entry name" value="Prot_kinase_dom"/>
</dbReference>
<dbReference type="InterPro" id="IPR017441">
    <property type="entry name" value="Protein_kinase_ATP_BS"/>
</dbReference>
<dbReference type="InterPro" id="IPR008271">
    <property type="entry name" value="Ser/Thr_kinase_AS"/>
</dbReference>
<dbReference type="PANTHER" id="PTHR47448">
    <property type="entry name" value="DUAL SPECIFICITY MITOGEN-ACTIVATED PROTEIN KINASE KINASE DSOR1-LIKE PROTEIN"/>
    <property type="match status" value="1"/>
</dbReference>
<dbReference type="PANTHER" id="PTHR47448:SF2">
    <property type="entry name" value="MITOGEN-ACTIVATED PROTEIN KINASE KINASE 1"/>
    <property type="match status" value="1"/>
</dbReference>
<dbReference type="Pfam" id="PF00069">
    <property type="entry name" value="Pkinase"/>
    <property type="match status" value="1"/>
</dbReference>
<dbReference type="SMART" id="SM00220">
    <property type="entry name" value="S_TKc"/>
    <property type="match status" value="1"/>
</dbReference>
<dbReference type="SUPFAM" id="SSF56112">
    <property type="entry name" value="Protein kinase-like (PK-like)"/>
    <property type="match status" value="1"/>
</dbReference>
<dbReference type="PROSITE" id="PS00107">
    <property type="entry name" value="PROTEIN_KINASE_ATP"/>
    <property type="match status" value="1"/>
</dbReference>
<dbReference type="PROSITE" id="PS50011">
    <property type="entry name" value="PROTEIN_KINASE_DOM"/>
    <property type="match status" value="1"/>
</dbReference>
<dbReference type="PROSITE" id="PS00108">
    <property type="entry name" value="PROTEIN_KINASE_ST"/>
    <property type="match status" value="1"/>
</dbReference>
<name>MP2K1_CRIGR</name>
<gene>
    <name type="primary">MAP2K1</name>
    <name type="synonym">MEK1</name>
    <name type="synonym">PRKMK1</name>
</gene>
<proteinExistence type="evidence at protein level"/>
<keyword id="KW-0067">ATP-binding</keyword>
<keyword id="KW-0963">Cytoplasm</keyword>
<keyword id="KW-0206">Cytoskeleton</keyword>
<keyword id="KW-0418">Kinase</keyword>
<keyword id="KW-0472">Membrane</keyword>
<keyword id="KW-0547">Nucleotide-binding</keyword>
<keyword id="KW-0539">Nucleus</keyword>
<keyword id="KW-0597">Phosphoprotein</keyword>
<keyword id="KW-1185">Reference proteome</keyword>
<keyword id="KW-0723">Serine/threonine-protein kinase</keyword>
<keyword id="KW-0808">Transferase</keyword>
<keyword id="KW-0829">Tyrosine-protein kinase</keyword>
<sequence>MPKKKPTPIQLNPTPDGSAVNGTSSAETNLEALQKKLEELELEEQQRNRLEAFLTQKQKVGELKDDDFEKISELGAGNGGVVFKVSHKPSGLVMARKLIHLEIKPAIRNQIIRELQVLHECNSPYIVGFYGVFYSDGEISICMEHMDGGSLDQVLKKAGRIPEQILGKVSIAVIKGLTYLREKHKIMHRDVKPSNILVNSRGEIKLCDFGVSGQLIDSMANSFVGTRSYMSPERLQGTHYSVQSDIWSMGLSLVEMAVGRYPIPPPDAKELELLFGCQVEGDAAETPPRPRTPGRPLSSYGMDSRPPMAIFELLDYIVNEPPAKLPSGVFSLEFQDFVNKCLIKNPAERADLKQLLVHAFIKRSDAEEVDFAGWLCSTIGLNQPSTPTHAASI</sequence>